<protein>
    <recommendedName>
        <fullName>Probable dipeptidyl-aminopeptidase B</fullName>
        <shortName>DPAP B</shortName>
        <ecNumber>3.4.14.5</ecNumber>
    </recommendedName>
</protein>
<proteinExistence type="inferred from homology"/>
<dbReference type="EC" id="3.4.14.5"/>
<dbReference type="EMBL" id="ACYE01000244">
    <property type="protein sequence ID" value="EFE40482.1"/>
    <property type="molecule type" value="Genomic_DNA"/>
</dbReference>
<dbReference type="RefSeq" id="XP_003021100.1">
    <property type="nucleotide sequence ID" value="XM_003021054.1"/>
</dbReference>
<dbReference type="SMR" id="D4DCG0"/>
<dbReference type="ESTHER" id="artbc-dapb">
    <property type="family name" value="DPP4N_Peptidase_S9"/>
</dbReference>
<dbReference type="GlyCosmos" id="D4DCG0">
    <property type="glycosylation" value="7 sites, No reported glycans"/>
</dbReference>
<dbReference type="GeneID" id="9577942"/>
<dbReference type="KEGG" id="tve:TRV_04813"/>
<dbReference type="HOGENOM" id="CLU_006105_0_1_1"/>
<dbReference type="OrthoDB" id="1167at34384"/>
<dbReference type="Proteomes" id="UP000008383">
    <property type="component" value="Unassembled WGS sequence"/>
</dbReference>
<dbReference type="GO" id="GO:0005886">
    <property type="term" value="C:plasma membrane"/>
    <property type="evidence" value="ECO:0007669"/>
    <property type="project" value="TreeGrafter"/>
</dbReference>
<dbReference type="GO" id="GO:0005774">
    <property type="term" value="C:vacuolar membrane"/>
    <property type="evidence" value="ECO:0007669"/>
    <property type="project" value="UniProtKB-SubCell"/>
</dbReference>
<dbReference type="GO" id="GO:0004177">
    <property type="term" value="F:aminopeptidase activity"/>
    <property type="evidence" value="ECO:0007669"/>
    <property type="project" value="UniProtKB-KW"/>
</dbReference>
<dbReference type="GO" id="GO:0008239">
    <property type="term" value="F:dipeptidyl-peptidase activity"/>
    <property type="evidence" value="ECO:0007669"/>
    <property type="project" value="UniProtKB-EC"/>
</dbReference>
<dbReference type="GO" id="GO:0004252">
    <property type="term" value="F:serine-type endopeptidase activity"/>
    <property type="evidence" value="ECO:0007669"/>
    <property type="project" value="InterPro"/>
</dbReference>
<dbReference type="GO" id="GO:0006508">
    <property type="term" value="P:proteolysis"/>
    <property type="evidence" value="ECO:0007669"/>
    <property type="project" value="UniProtKB-KW"/>
</dbReference>
<dbReference type="FunFam" id="3.40.50.1820:FF:000003">
    <property type="entry name" value="Dipeptidyl peptidase 4"/>
    <property type="match status" value="1"/>
</dbReference>
<dbReference type="Gene3D" id="3.40.50.1820">
    <property type="entry name" value="alpha/beta hydrolase"/>
    <property type="match status" value="1"/>
</dbReference>
<dbReference type="Gene3D" id="2.140.10.30">
    <property type="entry name" value="Dipeptidylpeptidase IV, N-terminal domain"/>
    <property type="match status" value="1"/>
</dbReference>
<dbReference type="InterPro" id="IPR029058">
    <property type="entry name" value="AB_hydrolase_fold"/>
</dbReference>
<dbReference type="InterPro" id="IPR002471">
    <property type="entry name" value="Pept_S9_AS"/>
</dbReference>
<dbReference type="InterPro" id="IPR001375">
    <property type="entry name" value="Peptidase_S9_cat"/>
</dbReference>
<dbReference type="InterPro" id="IPR002469">
    <property type="entry name" value="Peptidase_S9B_N"/>
</dbReference>
<dbReference type="InterPro" id="IPR050278">
    <property type="entry name" value="Serine_Prot_S9B/DPPIV"/>
</dbReference>
<dbReference type="PANTHER" id="PTHR11731:SF200">
    <property type="entry name" value="DIPEPTIDYL PEPTIDASE 10, ISOFORM B"/>
    <property type="match status" value="1"/>
</dbReference>
<dbReference type="PANTHER" id="PTHR11731">
    <property type="entry name" value="PROTEASE FAMILY S9B,C DIPEPTIDYL-PEPTIDASE IV-RELATED"/>
    <property type="match status" value="1"/>
</dbReference>
<dbReference type="Pfam" id="PF00930">
    <property type="entry name" value="DPPIV_N"/>
    <property type="match status" value="1"/>
</dbReference>
<dbReference type="Pfam" id="PF00326">
    <property type="entry name" value="Peptidase_S9"/>
    <property type="match status" value="1"/>
</dbReference>
<dbReference type="SUPFAM" id="SSF53474">
    <property type="entry name" value="alpha/beta-Hydrolases"/>
    <property type="match status" value="1"/>
</dbReference>
<dbReference type="SUPFAM" id="SSF82171">
    <property type="entry name" value="DPP6 N-terminal domain-like"/>
    <property type="match status" value="1"/>
</dbReference>
<dbReference type="PROSITE" id="PS00708">
    <property type="entry name" value="PRO_ENDOPEP_SER"/>
    <property type="match status" value="1"/>
</dbReference>
<keyword id="KW-0031">Aminopeptidase</keyword>
<keyword id="KW-0325">Glycoprotein</keyword>
<keyword id="KW-0378">Hydrolase</keyword>
<keyword id="KW-0472">Membrane</keyword>
<keyword id="KW-0645">Protease</keyword>
<keyword id="KW-0720">Serine protease</keyword>
<keyword id="KW-0735">Signal-anchor</keyword>
<keyword id="KW-0812">Transmembrane</keyword>
<keyword id="KW-1133">Transmembrane helix</keyword>
<keyword id="KW-0926">Vacuole</keyword>
<evidence type="ECO:0000250" key="1"/>
<evidence type="ECO:0000255" key="2"/>
<evidence type="ECO:0000255" key="3">
    <source>
        <dbReference type="PROSITE-ProRule" id="PRU10084"/>
    </source>
</evidence>
<evidence type="ECO:0000256" key="4">
    <source>
        <dbReference type="SAM" id="MobiDB-lite"/>
    </source>
</evidence>
<evidence type="ECO:0000305" key="5"/>
<reference key="1">
    <citation type="journal article" date="2011" name="Genome Biol.">
        <title>Comparative and functional genomics provide insights into the pathogenicity of dermatophytic fungi.</title>
        <authorList>
            <person name="Burmester A."/>
            <person name="Shelest E."/>
            <person name="Gloeckner G."/>
            <person name="Heddergott C."/>
            <person name="Schindler S."/>
            <person name="Staib P."/>
            <person name="Heidel A."/>
            <person name="Felder M."/>
            <person name="Petzold A."/>
            <person name="Szafranski K."/>
            <person name="Feuermann M."/>
            <person name="Pedruzzi I."/>
            <person name="Priebe S."/>
            <person name="Groth M."/>
            <person name="Winkler R."/>
            <person name="Li W."/>
            <person name="Kniemeyer O."/>
            <person name="Schroeckh V."/>
            <person name="Hertweck C."/>
            <person name="Hube B."/>
            <person name="White T.C."/>
            <person name="Platzer M."/>
            <person name="Guthke R."/>
            <person name="Heitman J."/>
            <person name="Woestemeyer J."/>
            <person name="Zipfel P.F."/>
            <person name="Monod M."/>
            <person name="Brakhage A.A."/>
        </authorList>
    </citation>
    <scope>NUCLEOTIDE SEQUENCE [LARGE SCALE GENOMIC DNA]</scope>
    <source>
        <strain>HKI 0517</strain>
    </source>
</reference>
<sequence length="899" mass="101076">MKLDRMRVGSRINDEEAMPLTAPESRARDSIDSSSTASISLTLVEGASHATTEPSKPAHNHNGRTQGNYAEKYRDDLEEDWEENNYIPTNGKSSQRRTLIVFWLLVALCVGGWAVAFLFFVTSPGNKTSTSPHSGSNSPEGDVTKPGIPATGKKIPLDDAIGGVWSPAEHTISWIAGAKGEDGLLLQKSEGGTGPYLHVEDVRNIHGTQSNNNSIVLMKESVFFVNDERISPEKVWPSPDLKTVLAMTREKKNWRHSFTGLYWLFDVETQTAQPLDPDAPNGRIQLATWSPTSDAVAFTRDNNLYIRNLTSKSVKAITTDGGTNLFYGIPDWVYEEEVFEGNIATWWSLDGKYISYLRTNETLVPEFPIDFYLSSPPGYSPKPGEESYPYVQQIKYPKAGAPNPTVSLQFYDIEREESFSVDVKDTLKDDDRLIVEVIPGSKGKVLVRETNRESYIVKVAVIDANKREGKIVRSDNIDEIDGGWVEPSHTTTYIPADPSAGRPDDGYIDTVIHEGYIHLAYFTPLENPKPKMLTTGKWEVVAAPSGVDLKNNVVYFVATKESPIDRHVYSVKLDGSELRMLKDSDKSAYYDVSFSHGAGYMLLKYQGPQIPWQKLISSPSNADNYIEILEENKKLAKLSNEFALPSLHYSTITVDGFELPVVERRPPNFDETKKYPVLFQLYGGPGSQTVNKKFLVNFQTYVASNLGYIVVTVDGRGTGFNGRKFKCIVRRNLGHYEAHDQIQAAKAWGKKPYVDKTRMAIWGWSYGGFMTLKTLEQDAGETFQYGMAVAPVTNWRYYDSVYTERYMHMPQNNEGGYENASISNATNLSQNTRFLIMHGSADDNVHFQNTLTLLDKLDILGVHNYDMHVFPDSNHGIYFHHAYKMVHQRKYFNLSFLGH</sequence>
<accession>D4DCG0</accession>
<gene>
    <name type="primary">DAPB</name>
    <name type="ORF">TRV_04813</name>
</gene>
<name>DAPB_TRIVH</name>
<feature type="chain" id="PRO_0000412165" description="Probable dipeptidyl-aminopeptidase B">
    <location>
        <begin position="1"/>
        <end position="899"/>
    </location>
</feature>
<feature type="topological domain" description="Cytoplasmic" evidence="2">
    <location>
        <begin position="1"/>
        <end position="99"/>
    </location>
</feature>
<feature type="transmembrane region" description="Helical; Signal-anchor for type II membrane protein" evidence="2">
    <location>
        <begin position="100"/>
        <end position="120"/>
    </location>
</feature>
<feature type="topological domain" description="Vacuolar" evidence="2">
    <location>
        <begin position="121"/>
        <end position="899"/>
    </location>
</feature>
<feature type="region of interest" description="Disordered" evidence="4">
    <location>
        <begin position="1"/>
        <end position="69"/>
    </location>
</feature>
<feature type="region of interest" description="Disordered" evidence="4">
    <location>
        <begin position="128"/>
        <end position="149"/>
    </location>
</feature>
<feature type="compositionally biased region" description="Low complexity" evidence="4">
    <location>
        <begin position="32"/>
        <end position="43"/>
    </location>
</feature>
<feature type="compositionally biased region" description="Polar residues" evidence="4">
    <location>
        <begin position="128"/>
        <end position="139"/>
    </location>
</feature>
<feature type="active site" description="Charge relay system" evidence="3">
    <location>
        <position position="765"/>
    </location>
</feature>
<feature type="active site" description="Charge relay system" evidence="3">
    <location>
        <position position="842"/>
    </location>
</feature>
<feature type="active site" description="Charge relay system" evidence="3">
    <location>
        <position position="875"/>
    </location>
</feature>
<feature type="glycosylation site" description="N-linked (GlcNAc...) asparagine" evidence="2">
    <location>
        <position position="212"/>
    </location>
</feature>
<feature type="glycosylation site" description="N-linked (GlcNAc...) asparagine" evidence="2">
    <location>
        <position position="308"/>
    </location>
</feature>
<feature type="glycosylation site" description="N-linked (GlcNAc...) asparagine" evidence="2">
    <location>
        <position position="360"/>
    </location>
</feature>
<feature type="glycosylation site" description="N-linked (GlcNAc...) asparagine" evidence="2">
    <location>
        <position position="819"/>
    </location>
</feature>
<feature type="glycosylation site" description="N-linked (GlcNAc...) asparagine" evidence="2">
    <location>
        <position position="824"/>
    </location>
</feature>
<feature type="glycosylation site" description="N-linked (GlcNAc...) asparagine" evidence="2">
    <location>
        <position position="827"/>
    </location>
</feature>
<feature type="glycosylation site" description="N-linked (GlcNAc...) asparagine" evidence="2">
    <location>
        <position position="893"/>
    </location>
</feature>
<organism>
    <name type="scientific">Trichophyton verrucosum (strain HKI 0517)</name>
    <dbReference type="NCBI Taxonomy" id="663202"/>
    <lineage>
        <taxon>Eukaryota</taxon>
        <taxon>Fungi</taxon>
        <taxon>Dikarya</taxon>
        <taxon>Ascomycota</taxon>
        <taxon>Pezizomycotina</taxon>
        <taxon>Eurotiomycetes</taxon>
        <taxon>Eurotiomycetidae</taxon>
        <taxon>Onygenales</taxon>
        <taxon>Arthrodermataceae</taxon>
        <taxon>Trichophyton</taxon>
    </lineage>
</organism>
<comment type="function">
    <text evidence="1">Type IV dipeptidyl-peptidase which removes N-terminal dipeptides sequentially from polypeptides having unsubstituted N-termini provided that the penultimate residue is proline.</text>
</comment>
<comment type="catalytic activity">
    <reaction evidence="3">
        <text>Release of an N-terminal dipeptide, Xaa-Yaa-|-Zaa-, from a polypeptide, preferentially when Yaa is Pro, provided Zaa is neither Pro nor hydroxyproline.</text>
        <dbReference type="EC" id="3.4.14.5"/>
    </reaction>
</comment>
<comment type="subcellular location">
    <subcellularLocation>
        <location evidence="1">Vacuole membrane</location>
        <topology evidence="1">Single-pass type II membrane protein</topology>
    </subcellularLocation>
    <text evidence="1">Lysosome-like vacuoles.</text>
</comment>
<comment type="similarity">
    <text evidence="5">Belongs to the peptidase S9B family.</text>
</comment>